<dbReference type="EC" id="3.5.4.13" evidence="1"/>
<dbReference type="EMBL" id="CP000526">
    <property type="protein sequence ID" value="ABM50565.1"/>
    <property type="molecule type" value="Genomic_DNA"/>
</dbReference>
<dbReference type="RefSeq" id="WP_004192666.1">
    <property type="nucleotide sequence ID" value="NC_008785.1"/>
</dbReference>
<dbReference type="SMR" id="A1V5V5"/>
<dbReference type="GeneID" id="93059502"/>
<dbReference type="KEGG" id="bmv:BMASAVP1_A2299"/>
<dbReference type="HOGENOM" id="CLU_087476_4_0_4"/>
<dbReference type="UniPathway" id="UPA00610">
    <property type="reaction ID" value="UER00665"/>
</dbReference>
<dbReference type="GO" id="GO:0008829">
    <property type="term" value="F:dCTP deaminase activity"/>
    <property type="evidence" value="ECO:0007669"/>
    <property type="project" value="UniProtKB-UniRule"/>
</dbReference>
<dbReference type="GO" id="GO:0000166">
    <property type="term" value="F:nucleotide binding"/>
    <property type="evidence" value="ECO:0007669"/>
    <property type="project" value="UniProtKB-KW"/>
</dbReference>
<dbReference type="GO" id="GO:0006226">
    <property type="term" value="P:dUMP biosynthetic process"/>
    <property type="evidence" value="ECO:0007669"/>
    <property type="project" value="UniProtKB-UniPathway"/>
</dbReference>
<dbReference type="GO" id="GO:0006229">
    <property type="term" value="P:dUTP biosynthetic process"/>
    <property type="evidence" value="ECO:0007669"/>
    <property type="project" value="UniProtKB-UniRule"/>
</dbReference>
<dbReference type="GO" id="GO:0015949">
    <property type="term" value="P:nucleobase-containing small molecule interconversion"/>
    <property type="evidence" value="ECO:0007669"/>
    <property type="project" value="TreeGrafter"/>
</dbReference>
<dbReference type="CDD" id="cd07557">
    <property type="entry name" value="trimeric_dUTPase"/>
    <property type="match status" value="1"/>
</dbReference>
<dbReference type="FunFam" id="2.70.40.10:FF:000001">
    <property type="entry name" value="dCTP deaminase"/>
    <property type="match status" value="1"/>
</dbReference>
<dbReference type="Gene3D" id="2.70.40.10">
    <property type="match status" value="1"/>
</dbReference>
<dbReference type="HAMAP" id="MF_00146">
    <property type="entry name" value="dCTP_deaminase"/>
    <property type="match status" value="1"/>
</dbReference>
<dbReference type="InterPro" id="IPR011962">
    <property type="entry name" value="dCTP_deaminase"/>
</dbReference>
<dbReference type="InterPro" id="IPR036157">
    <property type="entry name" value="dUTPase-like_sf"/>
</dbReference>
<dbReference type="InterPro" id="IPR033704">
    <property type="entry name" value="dUTPase_trimeric"/>
</dbReference>
<dbReference type="NCBIfam" id="TIGR02274">
    <property type="entry name" value="dCTP_deam"/>
    <property type="match status" value="1"/>
</dbReference>
<dbReference type="PANTHER" id="PTHR42680">
    <property type="entry name" value="DCTP DEAMINASE"/>
    <property type="match status" value="1"/>
</dbReference>
<dbReference type="PANTHER" id="PTHR42680:SF3">
    <property type="entry name" value="DCTP DEAMINASE"/>
    <property type="match status" value="1"/>
</dbReference>
<dbReference type="Pfam" id="PF22769">
    <property type="entry name" value="DCD"/>
    <property type="match status" value="1"/>
</dbReference>
<dbReference type="SUPFAM" id="SSF51283">
    <property type="entry name" value="dUTPase-like"/>
    <property type="match status" value="1"/>
</dbReference>
<accession>A1V5V5</accession>
<protein>
    <recommendedName>
        <fullName evidence="1">dCTP deaminase</fullName>
        <ecNumber evidence="1">3.5.4.13</ecNumber>
    </recommendedName>
    <alternativeName>
        <fullName evidence="1">Deoxycytidine triphosphate deaminase</fullName>
    </alternativeName>
</protein>
<name>DCD_BURMS</name>
<organism>
    <name type="scientific">Burkholderia mallei (strain SAVP1)</name>
    <dbReference type="NCBI Taxonomy" id="320388"/>
    <lineage>
        <taxon>Bacteria</taxon>
        <taxon>Pseudomonadati</taxon>
        <taxon>Pseudomonadota</taxon>
        <taxon>Betaproteobacteria</taxon>
        <taxon>Burkholderiales</taxon>
        <taxon>Burkholderiaceae</taxon>
        <taxon>Burkholderia</taxon>
        <taxon>pseudomallei group</taxon>
    </lineage>
</organism>
<evidence type="ECO:0000255" key="1">
    <source>
        <dbReference type="HAMAP-Rule" id="MF_00146"/>
    </source>
</evidence>
<gene>
    <name evidence="1" type="primary">dcd</name>
    <name type="ordered locus">BMASAVP1_A2299</name>
</gene>
<keyword id="KW-0378">Hydrolase</keyword>
<keyword id="KW-0546">Nucleotide metabolism</keyword>
<keyword id="KW-0547">Nucleotide-binding</keyword>
<sequence length="189" mass="21312">MSIKSDKWIRRMAEEHKMIEPFVPDQVRAAEDGRKIVSYGTSSYGYDIRCADEFKIFTNINSTIVDPKNFDEGSFVDFKGDVCIIPPNSFALARTVEYFRIPRTVLTVCLGKSTYARCGIIVNVTPFEPEWEGYVTLEFSNTTPLPAKIYANEGVAQVLFFESDEVCDVSYADRGGKYQGQRGVTLPKT</sequence>
<proteinExistence type="inferred from homology"/>
<comment type="function">
    <text evidence="1">Catalyzes the deamination of dCTP to dUTP.</text>
</comment>
<comment type="catalytic activity">
    <reaction evidence="1">
        <text>dCTP + H2O + H(+) = dUTP + NH4(+)</text>
        <dbReference type="Rhea" id="RHEA:22680"/>
        <dbReference type="ChEBI" id="CHEBI:15377"/>
        <dbReference type="ChEBI" id="CHEBI:15378"/>
        <dbReference type="ChEBI" id="CHEBI:28938"/>
        <dbReference type="ChEBI" id="CHEBI:61481"/>
        <dbReference type="ChEBI" id="CHEBI:61555"/>
        <dbReference type="EC" id="3.5.4.13"/>
    </reaction>
</comment>
<comment type="pathway">
    <text evidence="1">Pyrimidine metabolism; dUMP biosynthesis; dUMP from dCTP (dUTP route): step 1/2.</text>
</comment>
<comment type="subunit">
    <text evidence="1">Homotrimer.</text>
</comment>
<comment type="similarity">
    <text evidence="1">Belongs to the dCTP deaminase family.</text>
</comment>
<reference key="1">
    <citation type="journal article" date="2010" name="Genome Biol. Evol.">
        <title>Continuing evolution of Burkholderia mallei through genome reduction and large-scale rearrangements.</title>
        <authorList>
            <person name="Losada L."/>
            <person name="Ronning C.M."/>
            <person name="DeShazer D."/>
            <person name="Woods D."/>
            <person name="Fedorova N."/>
            <person name="Kim H.S."/>
            <person name="Shabalina S.A."/>
            <person name="Pearson T.R."/>
            <person name="Brinkac L."/>
            <person name="Tan P."/>
            <person name="Nandi T."/>
            <person name="Crabtree J."/>
            <person name="Badger J."/>
            <person name="Beckstrom-Sternberg S."/>
            <person name="Saqib M."/>
            <person name="Schutzer S.E."/>
            <person name="Keim P."/>
            <person name="Nierman W.C."/>
        </authorList>
    </citation>
    <scope>NUCLEOTIDE SEQUENCE [LARGE SCALE GENOMIC DNA]</scope>
    <source>
        <strain>SAVP1</strain>
    </source>
</reference>
<feature type="chain" id="PRO_1000009690" description="dCTP deaminase">
    <location>
        <begin position="1"/>
        <end position="189"/>
    </location>
</feature>
<feature type="active site" description="Proton donor/acceptor" evidence="1">
    <location>
        <position position="138"/>
    </location>
</feature>
<feature type="binding site" evidence="1">
    <location>
        <begin position="112"/>
        <end position="117"/>
    </location>
    <ligand>
        <name>dCTP</name>
        <dbReference type="ChEBI" id="CHEBI:61481"/>
    </ligand>
</feature>
<feature type="binding site" evidence="1">
    <location>
        <begin position="136"/>
        <end position="138"/>
    </location>
    <ligand>
        <name>dCTP</name>
        <dbReference type="ChEBI" id="CHEBI:61481"/>
    </ligand>
</feature>
<feature type="binding site" evidence="1">
    <location>
        <position position="157"/>
    </location>
    <ligand>
        <name>dCTP</name>
        <dbReference type="ChEBI" id="CHEBI:61481"/>
    </ligand>
</feature>
<feature type="binding site" evidence="1">
    <location>
        <position position="171"/>
    </location>
    <ligand>
        <name>dCTP</name>
        <dbReference type="ChEBI" id="CHEBI:61481"/>
    </ligand>
</feature>
<feature type="binding site" evidence="1">
    <location>
        <position position="181"/>
    </location>
    <ligand>
        <name>dCTP</name>
        <dbReference type="ChEBI" id="CHEBI:61481"/>
    </ligand>
</feature>